<accession>A5UDN2</accession>
<reference key="1">
    <citation type="journal article" date="2007" name="Genome Biol.">
        <title>Characterization and modeling of the Haemophilus influenzae core and supragenomes based on the complete genomic sequences of Rd and 12 clinical nontypeable strains.</title>
        <authorList>
            <person name="Hogg J.S."/>
            <person name="Hu F.Z."/>
            <person name="Janto B."/>
            <person name="Boissy R."/>
            <person name="Hayes J."/>
            <person name="Keefe R."/>
            <person name="Post J.C."/>
            <person name="Ehrlich G.D."/>
        </authorList>
    </citation>
    <scope>NUCLEOTIDE SEQUENCE [LARGE SCALE GENOMIC DNA]</scope>
    <source>
        <strain>PittEE</strain>
    </source>
</reference>
<comment type="similarity">
    <text evidence="1">Belongs to the UPF0352 family.</text>
</comment>
<name>Y7850_HAEIE</name>
<dbReference type="EMBL" id="CP000671">
    <property type="protein sequence ID" value="ABQ98883.1"/>
    <property type="molecule type" value="Genomic_DNA"/>
</dbReference>
<dbReference type="SMR" id="A5UDN2"/>
<dbReference type="KEGG" id="hip:CGSHiEE_07850"/>
<dbReference type="HOGENOM" id="CLU_175457_0_0_6"/>
<dbReference type="Gene3D" id="1.10.3390.10">
    <property type="entry name" value="YejL-like"/>
    <property type="match status" value="1"/>
</dbReference>
<dbReference type="HAMAP" id="MF_00816">
    <property type="entry name" value="UPF0352"/>
    <property type="match status" value="1"/>
</dbReference>
<dbReference type="InterPro" id="IPR009857">
    <property type="entry name" value="UPF0352"/>
</dbReference>
<dbReference type="InterPro" id="IPR023202">
    <property type="entry name" value="YejL_sf"/>
</dbReference>
<dbReference type="NCBIfam" id="NF010242">
    <property type="entry name" value="PRK13689.1"/>
    <property type="match status" value="1"/>
</dbReference>
<dbReference type="Pfam" id="PF07208">
    <property type="entry name" value="DUF1414"/>
    <property type="match status" value="1"/>
</dbReference>
<dbReference type="PIRSF" id="PIRSF006188">
    <property type="entry name" value="UCP006188"/>
    <property type="match status" value="1"/>
</dbReference>
<dbReference type="SUPFAM" id="SSF158651">
    <property type="entry name" value="YejL-like"/>
    <property type="match status" value="1"/>
</dbReference>
<gene>
    <name type="ordered locus">CGSHiEE_07850</name>
</gene>
<organism>
    <name type="scientific">Haemophilus influenzae (strain PittEE)</name>
    <dbReference type="NCBI Taxonomy" id="374930"/>
    <lineage>
        <taxon>Bacteria</taxon>
        <taxon>Pseudomonadati</taxon>
        <taxon>Pseudomonadota</taxon>
        <taxon>Gammaproteobacteria</taxon>
        <taxon>Pasteurellales</taxon>
        <taxon>Pasteurellaceae</taxon>
        <taxon>Haemophilus</taxon>
    </lineage>
</organism>
<proteinExistence type="inferred from homology"/>
<protein>
    <recommendedName>
        <fullName evidence="1">UPF0352 protein CGSHiEE_07850</fullName>
    </recommendedName>
</protein>
<sequence length="72" mass="7737">MAQHSKYSDAQLSAIVNDMIAVLEKHKAPVDLSLIALGNMASNLLTTSVPQTQREALAQAFSNSLINAVKTR</sequence>
<evidence type="ECO:0000255" key="1">
    <source>
        <dbReference type="HAMAP-Rule" id="MF_00816"/>
    </source>
</evidence>
<feature type="chain" id="PRO_1000062306" description="UPF0352 protein CGSHiEE_07850">
    <location>
        <begin position="1"/>
        <end position="72"/>
    </location>
</feature>